<name>SPEA_TOLAT</name>
<reference key="1">
    <citation type="submission" date="2009-05" db="EMBL/GenBank/DDBJ databases">
        <title>Complete sequence of Tolumonas auensis DSM 9187.</title>
        <authorList>
            <consortium name="US DOE Joint Genome Institute"/>
            <person name="Lucas S."/>
            <person name="Copeland A."/>
            <person name="Lapidus A."/>
            <person name="Glavina del Rio T."/>
            <person name="Tice H."/>
            <person name="Bruce D."/>
            <person name="Goodwin L."/>
            <person name="Pitluck S."/>
            <person name="Chertkov O."/>
            <person name="Brettin T."/>
            <person name="Detter J.C."/>
            <person name="Han C."/>
            <person name="Larimer F."/>
            <person name="Land M."/>
            <person name="Hauser L."/>
            <person name="Kyrpides N."/>
            <person name="Mikhailova N."/>
            <person name="Spring S."/>
            <person name="Beller H."/>
        </authorList>
    </citation>
    <scope>NUCLEOTIDE SEQUENCE [LARGE SCALE GENOMIC DNA]</scope>
    <source>
        <strain>DSM 9187 / NBRC 110442 / TA 4</strain>
    </source>
</reference>
<sequence>MANWSCQDALKMYNVPYWGAGFFNIDALGRVVVTPDKTRLDCKIALVDIIEQLRKQGYATPVLLRFPDIIKTRINALFGAFEQAIQSYGYKGRYQCVYPIKVNQQNQVIESVTRAFADKPALGLEAGSKPELLAVLSHHHDLGSVIVCNGYKDREYVRHALLGSLLGHHVYIVVEKPSELELILDEAARLNITPRIGVRARLASQGSGKWQASGGEKSKFGLNAAQILRLVERLREADKLDCLQLVHFHLGSQIANIRDIQGGIRECGRFYAELRHLGANIEVVDVGGGLGVDYEGSRSQSHCSANYNLREYANNVVWGIGDVCAEFDLPHPMIISESGRAITAHHAVLISNIVGMESQLPTSLPDAPDAEAPMLLQNMWDSWKELHEKEDPGLLEIFHDSVSDLADVHTQYTLGMLSLHQRAWAEDLHLNLCLKLKVMLDPVNRMHRNLQDELNEKLADKCFVNFSLFQSLPDAWGIDQIFPIMPLSGLDQQPTRRGVIMDITCDSDGMIKEYVDGVGIENSLPMPEMRNDETNYMGFFLVGAYQEILGDLHNLFGDTHSAEVCLNDNGEPVITNIIKGDNVDNLLRYVNIDTSVIRRDYQKLVAHPSLSEETRKALLEELEAGLQGYAYLEDE</sequence>
<evidence type="ECO:0000255" key="1">
    <source>
        <dbReference type="HAMAP-Rule" id="MF_01417"/>
    </source>
</evidence>
<accession>C4L9A9</accession>
<protein>
    <recommendedName>
        <fullName evidence="1">Biosynthetic arginine decarboxylase</fullName>
        <shortName evidence="1">ADC</shortName>
        <ecNumber evidence="1">4.1.1.19</ecNumber>
    </recommendedName>
</protein>
<proteinExistence type="inferred from homology"/>
<comment type="function">
    <text evidence="1">Catalyzes the biosynthesis of agmatine from arginine.</text>
</comment>
<comment type="catalytic activity">
    <reaction evidence="1">
        <text>L-arginine + H(+) = agmatine + CO2</text>
        <dbReference type="Rhea" id="RHEA:17641"/>
        <dbReference type="ChEBI" id="CHEBI:15378"/>
        <dbReference type="ChEBI" id="CHEBI:16526"/>
        <dbReference type="ChEBI" id="CHEBI:32682"/>
        <dbReference type="ChEBI" id="CHEBI:58145"/>
        <dbReference type="EC" id="4.1.1.19"/>
    </reaction>
</comment>
<comment type="cofactor">
    <cofactor evidence="1">
        <name>Mg(2+)</name>
        <dbReference type="ChEBI" id="CHEBI:18420"/>
    </cofactor>
</comment>
<comment type="cofactor">
    <cofactor evidence="1">
        <name>pyridoxal 5'-phosphate</name>
        <dbReference type="ChEBI" id="CHEBI:597326"/>
    </cofactor>
</comment>
<comment type="pathway">
    <text evidence="1">Amine and polyamine biosynthesis; agmatine biosynthesis; agmatine from L-arginine: step 1/1.</text>
</comment>
<comment type="similarity">
    <text evidence="1">Belongs to the Orn/Lys/Arg decarboxylase class-II family. SpeA subfamily.</text>
</comment>
<feature type="chain" id="PRO_1000215249" description="Biosynthetic arginine decarboxylase">
    <location>
        <begin position="1"/>
        <end position="635"/>
    </location>
</feature>
<feature type="binding site" evidence="1">
    <location>
        <begin position="284"/>
        <end position="294"/>
    </location>
    <ligand>
        <name>substrate</name>
    </ligand>
</feature>
<feature type="modified residue" description="N6-(pyridoxal phosphate)lysine" evidence="1">
    <location>
        <position position="101"/>
    </location>
</feature>
<gene>
    <name evidence="1" type="primary">speA</name>
    <name type="ordered locus">Tola_0379</name>
</gene>
<organism>
    <name type="scientific">Tolumonas auensis (strain DSM 9187 / NBRC 110442 / TA 4)</name>
    <dbReference type="NCBI Taxonomy" id="595494"/>
    <lineage>
        <taxon>Bacteria</taxon>
        <taxon>Pseudomonadati</taxon>
        <taxon>Pseudomonadota</taxon>
        <taxon>Gammaproteobacteria</taxon>
        <taxon>Aeromonadales</taxon>
        <taxon>Aeromonadaceae</taxon>
        <taxon>Tolumonas</taxon>
    </lineage>
</organism>
<dbReference type="EC" id="4.1.1.19" evidence="1"/>
<dbReference type="EMBL" id="CP001616">
    <property type="protein sequence ID" value="ACQ92008.1"/>
    <property type="molecule type" value="Genomic_DNA"/>
</dbReference>
<dbReference type="RefSeq" id="WP_012728607.1">
    <property type="nucleotide sequence ID" value="NC_012691.1"/>
</dbReference>
<dbReference type="SMR" id="C4L9A9"/>
<dbReference type="STRING" id="595494.Tola_0379"/>
<dbReference type="KEGG" id="tau:Tola_0379"/>
<dbReference type="eggNOG" id="COG1166">
    <property type="taxonomic scope" value="Bacteria"/>
</dbReference>
<dbReference type="HOGENOM" id="CLU_027243_1_0_6"/>
<dbReference type="OrthoDB" id="9802658at2"/>
<dbReference type="UniPathway" id="UPA00186">
    <property type="reaction ID" value="UER00284"/>
</dbReference>
<dbReference type="Proteomes" id="UP000009073">
    <property type="component" value="Chromosome"/>
</dbReference>
<dbReference type="GO" id="GO:0008792">
    <property type="term" value="F:arginine decarboxylase activity"/>
    <property type="evidence" value="ECO:0007669"/>
    <property type="project" value="UniProtKB-UniRule"/>
</dbReference>
<dbReference type="GO" id="GO:0046872">
    <property type="term" value="F:metal ion binding"/>
    <property type="evidence" value="ECO:0007669"/>
    <property type="project" value="UniProtKB-KW"/>
</dbReference>
<dbReference type="GO" id="GO:0006527">
    <property type="term" value="P:arginine catabolic process"/>
    <property type="evidence" value="ECO:0007669"/>
    <property type="project" value="InterPro"/>
</dbReference>
<dbReference type="GO" id="GO:0033388">
    <property type="term" value="P:putrescine biosynthetic process from arginine"/>
    <property type="evidence" value="ECO:0007669"/>
    <property type="project" value="TreeGrafter"/>
</dbReference>
<dbReference type="GO" id="GO:0008295">
    <property type="term" value="P:spermidine biosynthetic process"/>
    <property type="evidence" value="ECO:0007669"/>
    <property type="project" value="UniProtKB-UniRule"/>
</dbReference>
<dbReference type="CDD" id="cd06830">
    <property type="entry name" value="PLPDE_III_ADC"/>
    <property type="match status" value="1"/>
</dbReference>
<dbReference type="FunFam" id="3.20.20.10:FF:000001">
    <property type="entry name" value="Biosynthetic arginine decarboxylase"/>
    <property type="match status" value="1"/>
</dbReference>
<dbReference type="Gene3D" id="1.10.287.3440">
    <property type="match status" value="1"/>
</dbReference>
<dbReference type="Gene3D" id="1.20.58.930">
    <property type="match status" value="1"/>
</dbReference>
<dbReference type="Gene3D" id="3.20.20.10">
    <property type="entry name" value="Alanine racemase"/>
    <property type="match status" value="1"/>
</dbReference>
<dbReference type="Gene3D" id="2.40.37.10">
    <property type="entry name" value="Lyase, Ornithine Decarboxylase, Chain A, domain 1"/>
    <property type="match status" value="1"/>
</dbReference>
<dbReference type="HAMAP" id="MF_01417">
    <property type="entry name" value="SpeA"/>
    <property type="match status" value="1"/>
</dbReference>
<dbReference type="InterPro" id="IPR009006">
    <property type="entry name" value="Ala_racemase/Decarboxylase_C"/>
</dbReference>
<dbReference type="InterPro" id="IPR040634">
    <property type="entry name" value="Arg_decarb_HB"/>
</dbReference>
<dbReference type="InterPro" id="IPR041128">
    <property type="entry name" value="Arg_decarbox_C"/>
</dbReference>
<dbReference type="InterPro" id="IPR002985">
    <property type="entry name" value="Arg_decrbxlase"/>
</dbReference>
<dbReference type="InterPro" id="IPR022657">
    <property type="entry name" value="De-COase2_CS"/>
</dbReference>
<dbReference type="InterPro" id="IPR022644">
    <property type="entry name" value="De-COase2_N"/>
</dbReference>
<dbReference type="InterPro" id="IPR000183">
    <property type="entry name" value="Orn/DAP/Arg_de-COase"/>
</dbReference>
<dbReference type="InterPro" id="IPR029066">
    <property type="entry name" value="PLP-binding_barrel"/>
</dbReference>
<dbReference type="NCBIfam" id="NF003763">
    <property type="entry name" value="PRK05354.1"/>
    <property type="match status" value="1"/>
</dbReference>
<dbReference type="NCBIfam" id="TIGR01273">
    <property type="entry name" value="speA"/>
    <property type="match status" value="1"/>
</dbReference>
<dbReference type="PANTHER" id="PTHR43295">
    <property type="entry name" value="ARGININE DECARBOXYLASE"/>
    <property type="match status" value="1"/>
</dbReference>
<dbReference type="PANTHER" id="PTHR43295:SF9">
    <property type="entry name" value="BIOSYNTHETIC ARGININE DECARBOXYLASE"/>
    <property type="match status" value="1"/>
</dbReference>
<dbReference type="Pfam" id="PF17810">
    <property type="entry name" value="Arg_decarb_HB"/>
    <property type="match status" value="1"/>
</dbReference>
<dbReference type="Pfam" id="PF17944">
    <property type="entry name" value="Arg_decarbox_C"/>
    <property type="match status" value="1"/>
</dbReference>
<dbReference type="Pfam" id="PF02784">
    <property type="entry name" value="Orn_Arg_deC_N"/>
    <property type="match status" value="1"/>
</dbReference>
<dbReference type="PIRSF" id="PIRSF001336">
    <property type="entry name" value="Arg_decrbxlase"/>
    <property type="match status" value="1"/>
</dbReference>
<dbReference type="PRINTS" id="PR01180">
    <property type="entry name" value="ARGDCRBXLASE"/>
</dbReference>
<dbReference type="PRINTS" id="PR01179">
    <property type="entry name" value="ODADCRBXLASE"/>
</dbReference>
<dbReference type="SUPFAM" id="SSF50621">
    <property type="entry name" value="Alanine racemase C-terminal domain-like"/>
    <property type="match status" value="1"/>
</dbReference>
<dbReference type="SUPFAM" id="SSF51419">
    <property type="entry name" value="PLP-binding barrel"/>
    <property type="match status" value="1"/>
</dbReference>
<dbReference type="PROSITE" id="PS00879">
    <property type="entry name" value="ODR_DC_2_2"/>
    <property type="match status" value="1"/>
</dbReference>
<keyword id="KW-0210">Decarboxylase</keyword>
<keyword id="KW-0456">Lyase</keyword>
<keyword id="KW-0460">Magnesium</keyword>
<keyword id="KW-0479">Metal-binding</keyword>
<keyword id="KW-0620">Polyamine biosynthesis</keyword>
<keyword id="KW-0663">Pyridoxal phosphate</keyword>
<keyword id="KW-1185">Reference proteome</keyword>
<keyword id="KW-0745">Spermidine biosynthesis</keyword>